<organism>
    <name type="scientific">Campylobacter curvus (strain 525.92)</name>
    <dbReference type="NCBI Taxonomy" id="360105"/>
    <lineage>
        <taxon>Bacteria</taxon>
        <taxon>Pseudomonadati</taxon>
        <taxon>Campylobacterota</taxon>
        <taxon>Epsilonproteobacteria</taxon>
        <taxon>Campylobacterales</taxon>
        <taxon>Campylobacteraceae</taxon>
        <taxon>Campylobacter</taxon>
    </lineage>
</organism>
<reference key="1">
    <citation type="submission" date="2007-07" db="EMBL/GenBank/DDBJ databases">
        <title>Genome sequence of Campylobacter curvus 525.92 isolated from human feces.</title>
        <authorList>
            <person name="Fouts D.E."/>
            <person name="Mongodin E.F."/>
            <person name="Puiu D."/>
            <person name="Sebastian Y."/>
            <person name="Miller W.G."/>
            <person name="Mandrell R.E."/>
            <person name="Lastovica A.J."/>
            <person name="Nelson K.E."/>
        </authorList>
    </citation>
    <scope>NUCLEOTIDE SEQUENCE [LARGE SCALE GENOMIC DNA]</scope>
    <source>
        <strain>525.92</strain>
    </source>
</reference>
<dbReference type="EC" id="6.1.1.14" evidence="1"/>
<dbReference type="EMBL" id="CP000767">
    <property type="protein sequence ID" value="EAU01252.1"/>
    <property type="molecule type" value="Genomic_DNA"/>
</dbReference>
<dbReference type="RefSeq" id="WP_011992483.1">
    <property type="nucleotide sequence ID" value="NC_009715.2"/>
</dbReference>
<dbReference type="SMR" id="A7GZB9"/>
<dbReference type="STRING" id="360105.CCV52592_0284"/>
<dbReference type="KEGG" id="ccv:CCV52592_0284"/>
<dbReference type="HOGENOM" id="CLU_057066_1_0_7"/>
<dbReference type="OrthoDB" id="9802183at2"/>
<dbReference type="Proteomes" id="UP000006380">
    <property type="component" value="Chromosome"/>
</dbReference>
<dbReference type="GO" id="GO:0005829">
    <property type="term" value="C:cytosol"/>
    <property type="evidence" value="ECO:0007669"/>
    <property type="project" value="TreeGrafter"/>
</dbReference>
<dbReference type="GO" id="GO:0005524">
    <property type="term" value="F:ATP binding"/>
    <property type="evidence" value="ECO:0007669"/>
    <property type="project" value="UniProtKB-UniRule"/>
</dbReference>
<dbReference type="GO" id="GO:0004820">
    <property type="term" value="F:glycine-tRNA ligase activity"/>
    <property type="evidence" value="ECO:0007669"/>
    <property type="project" value="UniProtKB-UniRule"/>
</dbReference>
<dbReference type="GO" id="GO:0006426">
    <property type="term" value="P:glycyl-tRNA aminoacylation"/>
    <property type="evidence" value="ECO:0007669"/>
    <property type="project" value="UniProtKB-UniRule"/>
</dbReference>
<dbReference type="CDD" id="cd00733">
    <property type="entry name" value="GlyRS_alpha_core"/>
    <property type="match status" value="1"/>
</dbReference>
<dbReference type="FunFam" id="3.30.930.10:FF:000006">
    <property type="entry name" value="Glycine--tRNA ligase alpha subunit"/>
    <property type="match status" value="1"/>
</dbReference>
<dbReference type="Gene3D" id="3.30.930.10">
    <property type="entry name" value="Bira Bifunctional Protein, Domain 2"/>
    <property type="match status" value="1"/>
</dbReference>
<dbReference type="Gene3D" id="1.20.58.180">
    <property type="entry name" value="Class II aaRS and biotin synthetases, domain 2"/>
    <property type="match status" value="1"/>
</dbReference>
<dbReference type="HAMAP" id="MF_00254">
    <property type="entry name" value="Gly_tRNA_synth_alpha"/>
    <property type="match status" value="1"/>
</dbReference>
<dbReference type="InterPro" id="IPR045864">
    <property type="entry name" value="aa-tRNA-synth_II/BPL/LPL"/>
</dbReference>
<dbReference type="InterPro" id="IPR006194">
    <property type="entry name" value="Gly-tRNA-synth_heterodimer"/>
</dbReference>
<dbReference type="InterPro" id="IPR002310">
    <property type="entry name" value="Gly-tRNA_ligase_asu"/>
</dbReference>
<dbReference type="NCBIfam" id="TIGR00388">
    <property type="entry name" value="glyQ"/>
    <property type="match status" value="1"/>
</dbReference>
<dbReference type="NCBIfam" id="NF006827">
    <property type="entry name" value="PRK09348.1"/>
    <property type="match status" value="1"/>
</dbReference>
<dbReference type="PANTHER" id="PTHR30075:SF2">
    <property type="entry name" value="GLYCINE--TRNA LIGASE, CHLOROPLASTIC_MITOCHONDRIAL 2"/>
    <property type="match status" value="1"/>
</dbReference>
<dbReference type="PANTHER" id="PTHR30075">
    <property type="entry name" value="GLYCYL-TRNA SYNTHETASE"/>
    <property type="match status" value="1"/>
</dbReference>
<dbReference type="Pfam" id="PF02091">
    <property type="entry name" value="tRNA-synt_2e"/>
    <property type="match status" value="1"/>
</dbReference>
<dbReference type="PRINTS" id="PR01044">
    <property type="entry name" value="TRNASYNTHGA"/>
</dbReference>
<dbReference type="SUPFAM" id="SSF55681">
    <property type="entry name" value="Class II aaRS and biotin synthetases"/>
    <property type="match status" value="1"/>
</dbReference>
<dbReference type="PROSITE" id="PS50861">
    <property type="entry name" value="AA_TRNA_LIGASE_II_GLYAB"/>
    <property type="match status" value="1"/>
</dbReference>
<comment type="catalytic activity">
    <reaction evidence="1">
        <text>tRNA(Gly) + glycine + ATP = glycyl-tRNA(Gly) + AMP + diphosphate</text>
        <dbReference type="Rhea" id="RHEA:16013"/>
        <dbReference type="Rhea" id="RHEA-COMP:9664"/>
        <dbReference type="Rhea" id="RHEA-COMP:9683"/>
        <dbReference type="ChEBI" id="CHEBI:30616"/>
        <dbReference type="ChEBI" id="CHEBI:33019"/>
        <dbReference type="ChEBI" id="CHEBI:57305"/>
        <dbReference type="ChEBI" id="CHEBI:78442"/>
        <dbReference type="ChEBI" id="CHEBI:78522"/>
        <dbReference type="ChEBI" id="CHEBI:456215"/>
        <dbReference type="EC" id="6.1.1.14"/>
    </reaction>
</comment>
<comment type="subunit">
    <text evidence="1">Tetramer of two alpha and two beta subunits.</text>
</comment>
<comment type="subcellular location">
    <subcellularLocation>
        <location evidence="1">Cytoplasm</location>
    </subcellularLocation>
</comment>
<comment type="similarity">
    <text evidence="1">Belongs to the class-II aminoacyl-tRNA synthetase family.</text>
</comment>
<protein>
    <recommendedName>
        <fullName evidence="1">Glycine--tRNA ligase alpha subunit</fullName>
        <ecNumber evidence="1">6.1.1.14</ecNumber>
    </recommendedName>
    <alternativeName>
        <fullName evidence="1">Glycyl-tRNA synthetase alpha subunit</fullName>
        <shortName evidence="1">GlyRS</shortName>
    </alternativeName>
</protein>
<gene>
    <name evidence="1" type="primary">glyQ</name>
    <name type="ordered locus">Ccur92_12570</name>
    <name type="ORF">CCV52592_0284</name>
</gene>
<accession>A7GZB9</accession>
<feature type="chain" id="PRO_1000047405" description="Glycine--tRNA ligase alpha subunit">
    <location>
        <begin position="1"/>
        <end position="287"/>
    </location>
</feature>
<evidence type="ECO:0000255" key="1">
    <source>
        <dbReference type="HAMAP-Rule" id="MF_00254"/>
    </source>
</evidence>
<name>SYGA_CAMC5</name>
<proteinExistence type="inferred from homology"/>
<keyword id="KW-0030">Aminoacyl-tRNA synthetase</keyword>
<keyword id="KW-0067">ATP-binding</keyword>
<keyword id="KW-0963">Cytoplasm</keyword>
<keyword id="KW-0436">Ligase</keyword>
<keyword id="KW-0547">Nucleotide-binding</keyword>
<keyword id="KW-0648">Protein biosynthesis</keyword>
<keyword id="KW-1185">Reference proteome</keyword>
<sequence length="287" mass="33027">MTFSEIILTLQSYWREQGCVILQPYDMPAGAGTYHQATFLRSLGPKPWATAYVAPSRRPTDGRYGENPNRLGAYYQFQVLIKPSPENIQELYLKSLERLGLDLKKHDIRFVEDNWESPTLGAWGLGWEVWLDGMEVTQFTYFQQVGGIACELISGEITYGLERLAMYLQDIDNVYDIVWDDKNGVVTYGDVHKQGEYEWSKYNFEIADTAMLFNQFENAFKECKRCLEAKISLPAYDYCMLAAHTFNVLDARGAISVTQRQEHILKIRELTKECALTYKASLEEKGE</sequence>